<organism>
    <name type="scientific">Homo sapiens</name>
    <name type="common">Human</name>
    <dbReference type="NCBI Taxonomy" id="9606"/>
    <lineage>
        <taxon>Eukaryota</taxon>
        <taxon>Metazoa</taxon>
        <taxon>Chordata</taxon>
        <taxon>Craniata</taxon>
        <taxon>Vertebrata</taxon>
        <taxon>Euteleostomi</taxon>
        <taxon>Mammalia</taxon>
        <taxon>Eutheria</taxon>
        <taxon>Euarchontoglires</taxon>
        <taxon>Primates</taxon>
        <taxon>Haplorrhini</taxon>
        <taxon>Catarrhini</taxon>
        <taxon>Hominidae</taxon>
        <taxon>Homo</taxon>
    </lineage>
</organism>
<sequence length="248" mass="26242">MWLCPLALNLILMAASGAVCEVKDVCVGSPGIPGTPGSHGLPGRDGRDGLKGDPGPPGPMGPPGEMPCPPGNDGLPGAPGIPGECGEKGEPGERGPPGLPAHLDEELQATLHDFRHQILQTRGALSLQGSIMTVGEKVFSSNGQSITFDAIQEACARAGGRIAVPRNPEENEAIASFVKKYNTYAYVGLTEGPSPGDFRYSDGTPVNYTNWYRGEPAGRGKEQCVEMYTDGQWNDRNCLYSRLTICEF</sequence>
<feature type="signal peptide">
    <location>
        <begin position="1"/>
        <end position="20"/>
    </location>
</feature>
<feature type="chain" id="PRO_0000017457" description="Pulmonary surfactant-associated protein A1">
    <location>
        <begin position="21"/>
        <end position="248"/>
    </location>
</feature>
<feature type="domain" description="Collagen-like">
    <location>
        <begin position="28"/>
        <end position="100"/>
    </location>
</feature>
<feature type="domain" description="C-type lectin" evidence="3">
    <location>
        <begin position="132"/>
        <end position="248"/>
    </location>
</feature>
<feature type="region of interest" description="Disordered" evidence="4">
    <location>
        <begin position="31"/>
        <end position="101"/>
    </location>
</feature>
<feature type="compositionally biased region" description="Basic and acidic residues" evidence="4">
    <location>
        <begin position="42"/>
        <end position="51"/>
    </location>
</feature>
<feature type="compositionally biased region" description="Pro residues" evidence="4">
    <location>
        <begin position="54"/>
        <end position="70"/>
    </location>
</feature>
<feature type="modified residue" description="4-hydroxyproline" evidence="1">
    <location>
        <position position="30"/>
    </location>
</feature>
<feature type="modified residue" description="4-hydroxyproline" evidence="1">
    <location>
        <position position="33"/>
    </location>
</feature>
<feature type="modified residue" description="4-hydroxyproline" evidence="1">
    <location>
        <position position="36"/>
    </location>
</feature>
<feature type="modified residue" description="4-hydroxyproline" evidence="1">
    <location>
        <position position="42"/>
    </location>
</feature>
<feature type="modified residue" description="4-hydroxyproline" evidence="1">
    <location>
        <position position="54"/>
    </location>
</feature>
<feature type="modified residue" description="4-hydroxyproline" evidence="1">
    <location>
        <position position="57"/>
    </location>
</feature>
<feature type="modified residue" description="4-hydroxyproline" evidence="1">
    <location>
        <position position="63"/>
    </location>
</feature>
<feature type="modified residue" description="4-hydroxyproline" evidence="1">
    <location>
        <position position="67"/>
    </location>
</feature>
<feature type="modified residue" description="4-hydroxyproline" evidence="1">
    <location>
        <position position="70"/>
    </location>
</feature>
<feature type="glycosylation site" description="N-linked (GlcNAc...) asparagine" evidence="22">
    <location>
        <position position="207"/>
    </location>
</feature>
<feature type="disulfide bond" description="Interchain" evidence="23">
    <location>
        <position position="26"/>
    </location>
</feature>
<feature type="disulfide bond" evidence="3 14">
    <location>
        <begin position="155"/>
        <end position="246"/>
    </location>
</feature>
<feature type="disulfide bond" evidence="3 14">
    <location>
        <begin position="224"/>
        <end position="238"/>
    </location>
</feature>
<feature type="splice variant" id="VSP_046802" description="In isoform 2." evidence="22">
    <original>M</original>
    <variation>MRPCQVPGAATGPRAM</variation>
    <location>
        <position position="1"/>
    </location>
</feature>
<feature type="sequence variant" id="VAR_063517" description="In dbSNP:rs72659389." evidence="9">
    <original>P</original>
    <variation>L</variation>
    <location>
        <position position="5"/>
    </location>
</feature>
<feature type="sequence variant" id="VAR_004184" description="In dbSNP:rs139899873." evidence="9 21">
    <original>N</original>
    <variation>T</variation>
    <location>
        <position position="9"/>
    </location>
</feature>
<feature type="sequence variant" id="VAR_021292" description="In allele 6A and allele 6A(5); dbSNP:rs1059047." evidence="9 10 19 21">
    <original>V</original>
    <variation>A</variation>
    <location>
        <position position="19"/>
    </location>
</feature>
<feature type="sequence variant" id="VAR_012231" description="In allele 6A(2); dbSNP:rs1136450." evidence="9 10 21">
    <original>L</original>
    <variation>V</variation>
    <location>
        <position position="50"/>
    </location>
</feature>
<feature type="sequence variant" id="VAR_086118" description="In ILD1; impaired secretion." evidence="16 18">
    <original>V</original>
    <variation>M</variation>
    <location>
        <position position="178"/>
    </location>
</feature>
<feature type="sequence variant" id="VAR_086119" description="In ILD1." evidence="17">
    <original>Y</original>
    <variation>H</variation>
    <location>
        <position position="208"/>
    </location>
</feature>
<feature type="sequence variant" id="VAR_086120" description="In ILD1; impaired secretion." evidence="15 18">
    <original>W</original>
    <variation>R</variation>
    <location>
        <position position="211"/>
    </location>
</feature>
<feature type="sequence variant" id="VAR_012232" description="Probable risk factor for idiopathic pulmonary fibrosis in smokers; allele 6A(4) and allele 6A(5); does not affect secretion; dbSNP:rs4253527." evidence="6 9 10 15 21">
    <original>R</original>
    <variation>W</variation>
    <location>
        <position position="219"/>
    </location>
</feature>
<feature type="sequence variant" id="VAR_012233" description="In dbSNP:rs1965708.">
    <original>Q</original>
    <variation>K</variation>
    <location>
        <position position="223"/>
    </location>
</feature>
<feature type="sequence variant" id="VAR_086121" description="In ILD1; uncertain significance; impaired secretion." evidence="18">
    <original>V</original>
    <variation>M</variation>
    <location>
        <position position="225"/>
    </location>
</feature>
<feature type="sequence conflict" description="In Ref. 1; AAA36510." evidence="22" ref="1">
    <original>D</original>
    <variation>H</variation>
    <location>
        <position position="45"/>
    </location>
</feature>
<feature type="sequence conflict" description="In Ref. 1; AAA36510." evidence="22" ref="1">
    <original>P</original>
    <variation>L</variation>
    <location>
        <position position="54"/>
    </location>
</feature>
<feature type="sequence conflict" description="In Ref. 1; AAA36510." evidence="22" ref="1">
    <original>P</original>
    <variation>R</variation>
    <location>
        <position position="100"/>
    </location>
</feature>
<evidence type="ECO:0000250" key="1"/>
<evidence type="ECO:0000250" key="2">
    <source>
        <dbReference type="UniProtKB" id="P35242"/>
    </source>
</evidence>
<evidence type="ECO:0000255" key="3">
    <source>
        <dbReference type="PROSITE-ProRule" id="PRU00040"/>
    </source>
</evidence>
<evidence type="ECO:0000256" key="4">
    <source>
        <dbReference type="SAM" id="MobiDB-lite"/>
    </source>
</evidence>
<evidence type="ECO:0000269" key="5">
    <source>
    </source>
</evidence>
<evidence type="ECO:0000269" key="6">
    <source>
    </source>
</evidence>
<evidence type="ECO:0000269" key="7">
    <source>
    </source>
</evidence>
<evidence type="ECO:0000269" key="8">
    <source>
    </source>
</evidence>
<evidence type="ECO:0000269" key="9">
    <source>
    </source>
</evidence>
<evidence type="ECO:0000269" key="10">
    <source>
    </source>
</evidence>
<evidence type="ECO:0000269" key="11">
    <source>
    </source>
</evidence>
<evidence type="ECO:0000269" key="12">
    <source>
    </source>
</evidence>
<evidence type="ECO:0000269" key="13">
    <source>
    </source>
</evidence>
<evidence type="ECO:0000269" key="14">
    <source>
    </source>
</evidence>
<evidence type="ECO:0000269" key="15">
    <source>
    </source>
</evidence>
<evidence type="ECO:0000269" key="16">
    <source>
    </source>
</evidence>
<evidence type="ECO:0000269" key="17">
    <source>
    </source>
</evidence>
<evidence type="ECO:0000269" key="18">
    <source>
    </source>
</evidence>
<evidence type="ECO:0000269" key="19">
    <source>
    </source>
</evidence>
<evidence type="ECO:0000269" key="20">
    <source>
    </source>
</evidence>
<evidence type="ECO:0000269" key="21">
    <source ref="5"/>
</evidence>
<evidence type="ECO:0000305" key="22"/>
<evidence type="ECO:0000305" key="23">
    <source>
    </source>
</evidence>
<comment type="function">
    <text evidence="2">In presence of calcium ions, it binds to surfactant phospholipids and contributes to lower the surface tension at the air-liquid interface in the alveoli of the mammalian lung and is essential for normal respiration. Enhances the expression of MYO18A/SP-R210 on alveolar macrophages (By similarity).</text>
</comment>
<comment type="function">
    <text evidence="8 11 12">(Microbial infection) Recognition of M.tuberculosis by dendritic cells may occur partially via this molecule (PubMed:17158455, PubMed:21203928). Can recognize, bind, and opsonize pathogens to enhance their elimination by alveolar macrophages (PubMed:21123169).</text>
</comment>
<comment type="function">
    <text evidence="7 13">(Microbial infection) Binds M.pneumoniae CARDS toxin, serves as one receptor for this pathogen (PubMed:15845487, PubMed:25139904). When SFTPA1 is down-regulated by siRNA, less toxin binds to human cells and less vacuolization (a symptom of M.pneumoniae infection) is seen (PubMed:25139904).</text>
</comment>
<comment type="subunit">
    <text evidence="14 20">Oligomeric complex of 6 set of homotrimers (PubMed:2610270). Interacts with CD93 (PubMed:7977768).</text>
</comment>
<comment type="subunit">
    <text evidence="8">(Microbial infection) Binds M.bovis cell surface protein Apa via its glycosylated sites; probably also recognizes other bacterial moieties.</text>
</comment>
<comment type="subunit">
    <text evidence="11">(Microbial infection) Binds to the S.aureus extracellular adherence protein, Eap, thereby enhancing phagocytosis and killing of S.aureus by alveolar macrophages.</text>
</comment>
<comment type="subunit">
    <text evidence="7 13">(Microbial infection) Interacts with M.pneumoniae CARDS toxin; CARDS probably uses this protein as a receptor.</text>
</comment>
<comment type="interaction">
    <interactant intactId="EBI-11316418">
        <id>Q8IWL2</id>
    </interactant>
    <interactant intactId="EBI-1044970">
        <id>Q9UGM3</id>
        <label>DMBT1</label>
    </interactant>
    <organismsDiffer>false</organismsDiffer>
    <experiments>2</experiments>
</comment>
<comment type="interaction">
    <interactant intactId="EBI-11316418">
        <id>Q8IWL2</id>
    </interactant>
    <interactant intactId="EBI-2259548">
        <id>P75409</id>
        <label>cards</label>
    </interactant>
    <organismsDiffer>true</organismsDiffer>
    <experiments>2</experiments>
</comment>
<comment type="subcellular location">
    <subcellularLocation>
        <location evidence="15 18">Secreted</location>
    </subcellularLocation>
    <subcellularLocation>
        <location evidence="22">Secreted</location>
        <location evidence="22">Extracellular space</location>
        <location evidence="22">Extracellular matrix</location>
    </subcellularLocation>
    <subcellularLocation>
        <location evidence="22">Secreted</location>
        <location evidence="22">Extracellular space</location>
        <location evidence="22">Surface film</location>
    </subcellularLocation>
</comment>
<comment type="alternative products">
    <event type="alternative splicing"/>
    <isoform>
        <id>Q8IWL2-1</id>
        <name>1</name>
        <sequence type="displayed"/>
    </isoform>
    <isoform>
        <id>Q8IWL2-2</id>
        <name>2</name>
        <sequence type="described" ref="VSP_046802"/>
    </isoform>
</comment>
<comment type="PTM">
    <text evidence="19">N-acetylated.</text>
</comment>
<comment type="polymorphism">
    <text>At least 5 allelic variants of SFTPA1 are known: 6A, 6A(2), 6A(3), 6A(4) and 6A(5). The sequence shown is that of allele 6A(3).</text>
</comment>
<comment type="disease" evidence="15 16 17 18">
    <disease id="DI-06268">
        <name>Interstitial lung disease 1</name>
        <acronym>ILD1</acronym>
        <description>A form of interstitial lung disease, a heterogeneous group of diseases affecting the distal part of the lung and characterized by a progressive remodeling of the alveolar interstitium. The disease spectrum ranges from idiopathic interstitial pneumonia or pneumonitis to idiopathic pulmonary fibrosis, that is associated with an increased risk of developing lung cancer. Clinical features of interstitial lung disease include dyspnea, clubbing of the fingers, and restrictive lung capacity. ILD1 inheritance can be autosomal dominant with incomplete penetrance, and autosomal recessive.</description>
        <dbReference type="MIM" id="619611"/>
    </disease>
    <text>The disease is caused by variants affecting the gene represented in this entry.</text>
</comment>
<comment type="disease" evidence="5">
    <disease id="DI-02716">
        <name>Respiratory distress syndrome in premature infants</name>
        <acronym>RDS</acronym>
        <description>A lung disease affecting usually premature newborn infants. It is characterized by deficient gas exchange, diffuse atelectasis, high-permeability lung edema and fibrin-rich alveolar deposits called 'hyaline membranes'.</description>
        <dbReference type="MIM" id="267450"/>
    </disease>
    <text>Disease susceptibility may be associated with variants affecting the gene represented in this entry. The association between SFTPA1 alleles and respiratory distress syndrome in premature infants is dependent on a variation Ile to Thr at position 131 in SFTPB.</text>
</comment>
<comment type="miscellaneous">
    <text>Pulmonary surfactant consists of 90% lipid and 10% protein. There are 4 surfactant-associated proteins: 2 collagenous, carbohydrate-binding glycoproteins (SP-A and SP-D) and 2 small hydrophobic proteins (SP-B and SP-C).</text>
</comment>
<comment type="similarity">
    <text evidence="22">Belongs to the SFTPA family.</text>
</comment>
<comment type="online information" name="Functional Glycomics Gateway - Glycan Binding">
    <link uri="http://www.functionalglycomics.org/glycomics/GBPServlet?&amp;operationType=view&amp;cbpId=cbp_hum_Ctlect_232"/>
    <text>Pulmonary surfactant protein SP-A1</text>
</comment>
<name>SFTA1_HUMAN</name>
<proteinExistence type="evidence at protein level"/>
<reference key="1">
    <citation type="journal article" date="1985" name="Nature">
        <title>Isolation and characterization of the human pulmonary surfactant apoprotein gene.</title>
        <authorList>
            <person name="White R.T."/>
            <person name="Damm D."/>
            <person name="Miller J."/>
            <person name="Spratt K."/>
            <person name="Schilling J."/>
            <person name="Hawgood S."/>
            <person name="Benson B."/>
            <person name="Cordell B."/>
        </authorList>
    </citation>
    <scope>NUCLEOTIDE SEQUENCE [MRNA]</scope>
</reference>
<reference key="2">
    <citation type="journal article" date="1986" name="J. Biol. Chem.">
        <title>Isolation and characterization of cDNA clones for the 35-kDa pulmonary surfactant-associated protein.</title>
        <authorList>
            <person name="Floros J."/>
            <person name="Steinbrink R."/>
            <person name="Jacobs K."/>
            <person name="Phelps D."/>
            <person name="Kriz R."/>
            <person name="Recny M."/>
            <person name="Sultzman L."/>
            <person name="Jones S."/>
            <person name="Taeusch H.W."/>
            <person name="Frank H.A."/>
            <person name="Fritsch E.F."/>
        </authorList>
    </citation>
    <scope>NUCLEOTIDE SEQUENCE [MRNA]</scope>
    <scope>VARIANT ALA-19</scope>
    <scope>ACETYLATION</scope>
</reference>
<reference key="3">
    <citation type="journal article" date="2010" name="Am. J. Physiol.">
        <title>Human SP-A1 (SFTPA1) variant-specific 3' UTRs and poly(A) tail differentially affect the in vitro translation of a reporter gene.</title>
        <authorList>
            <person name="Silveyra P."/>
            <person name="Wang G."/>
            <person name="Floros J."/>
        </authorList>
    </citation>
    <scope>NUCLEOTIDE SEQUENCE [MRNA]</scope>
    <scope>VARIANTS ALA-19; VAL-50 AND TRP-219</scope>
</reference>
<reference key="4">
    <citation type="journal article" date="2004" name="Nat. Genet.">
        <title>Complete sequencing and characterization of 21,243 full-length human cDNAs.</title>
        <authorList>
            <person name="Ota T."/>
            <person name="Suzuki Y."/>
            <person name="Nishikawa T."/>
            <person name="Otsuki T."/>
            <person name="Sugiyama T."/>
            <person name="Irie R."/>
            <person name="Wakamatsu A."/>
            <person name="Hayashi K."/>
            <person name="Sato H."/>
            <person name="Nagai K."/>
            <person name="Kimura K."/>
            <person name="Makita H."/>
            <person name="Sekine M."/>
            <person name="Obayashi M."/>
            <person name="Nishi T."/>
            <person name="Shibahara T."/>
            <person name="Tanaka T."/>
            <person name="Ishii S."/>
            <person name="Yamamoto J."/>
            <person name="Saito K."/>
            <person name="Kawai Y."/>
            <person name="Isono Y."/>
            <person name="Nakamura Y."/>
            <person name="Nagahari K."/>
            <person name="Murakami K."/>
            <person name="Yasuda T."/>
            <person name="Iwayanagi T."/>
            <person name="Wagatsuma M."/>
            <person name="Shiratori A."/>
            <person name="Sudo H."/>
            <person name="Hosoiri T."/>
            <person name="Kaku Y."/>
            <person name="Kodaira H."/>
            <person name="Kondo H."/>
            <person name="Sugawara M."/>
            <person name="Takahashi M."/>
            <person name="Kanda K."/>
            <person name="Yokoi T."/>
            <person name="Furuya T."/>
            <person name="Kikkawa E."/>
            <person name="Omura Y."/>
            <person name="Abe K."/>
            <person name="Kamihara K."/>
            <person name="Katsuta N."/>
            <person name="Sato K."/>
            <person name="Tanikawa M."/>
            <person name="Yamazaki M."/>
            <person name="Ninomiya K."/>
            <person name="Ishibashi T."/>
            <person name="Yamashita H."/>
            <person name="Murakawa K."/>
            <person name="Fujimori K."/>
            <person name="Tanai H."/>
            <person name="Kimata M."/>
            <person name="Watanabe M."/>
            <person name="Hiraoka S."/>
            <person name="Chiba Y."/>
            <person name="Ishida S."/>
            <person name="Ono Y."/>
            <person name="Takiguchi S."/>
            <person name="Watanabe S."/>
            <person name="Yosida M."/>
            <person name="Hotuta T."/>
            <person name="Kusano J."/>
            <person name="Kanehori K."/>
            <person name="Takahashi-Fujii A."/>
            <person name="Hara H."/>
            <person name="Tanase T.-O."/>
            <person name="Nomura Y."/>
            <person name="Togiya S."/>
            <person name="Komai F."/>
            <person name="Hara R."/>
            <person name="Takeuchi K."/>
            <person name="Arita M."/>
            <person name="Imose N."/>
            <person name="Musashino K."/>
            <person name="Yuuki H."/>
            <person name="Oshima A."/>
            <person name="Sasaki N."/>
            <person name="Aotsuka S."/>
            <person name="Yoshikawa Y."/>
            <person name="Matsunawa H."/>
            <person name="Ichihara T."/>
            <person name="Shiohata N."/>
            <person name="Sano S."/>
            <person name="Moriya S."/>
            <person name="Momiyama H."/>
            <person name="Satoh N."/>
            <person name="Takami S."/>
            <person name="Terashima Y."/>
            <person name="Suzuki O."/>
            <person name="Nakagawa S."/>
            <person name="Senoh A."/>
            <person name="Mizoguchi H."/>
            <person name="Goto Y."/>
            <person name="Shimizu F."/>
            <person name="Wakebe H."/>
            <person name="Hishigaki H."/>
            <person name="Watanabe T."/>
            <person name="Sugiyama A."/>
            <person name="Takemoto M."/>
            <person name="Kawakami B."/>
            <person name="Yamazaki M."/>
            <person name="Watanabe K."/>
            <person name="Kumagai A."/>
            <person name="Itakura S."/>
            <person name="Fukuzumi Y."/>
            <person name="Fujimori Y."/>
            <person name="Komiyama M."/>
            <person name="Tashiro H."/>
            <person name="Tanigami A."/>
            <person name="Fujiwara T."/>
            <person name="Ono T."/>
            <person name="Yamada K."/>
            <person name="Fujii Y."/>
            <person name="Ozaki K."/>
            <person name="Hirao M."/>
            <person name="Ohmori Y."/>
            <person name="Kawabata A."/>
            <person name="Hikiji T."/>
            <person name="Kobatake N."/>
            <person name="Inagaki H."/>
            <person name="Ikema Y."/>
            <person name="Okamoto S."/>
            <person name="Okitani R."/>
            <person name="Kawakami T."/>
            <person name="Noguchi S."/>
            <person name="Itoh T."/>
            <person name="Shigeta K."/>
            <person name="Senba T."/>
            <person name="Matsumura K."/>
            <person name="Nakajima Y."/>
            <person name="Mizuno T."/>
            <person name="Morinaga M."/>
            <person name="Sasaki M."/>
            <person name="Togashi T."/>
            <person name="Oyama M."/>
            <person name="Hata H."/>
            <person name="Watanabe M."/>
            <person name="Komatsu T."/>
            <person name="Mizushima-Sugano J."/>
            <person name="Satoh T."/>
            <person name="Shirai Y."/>
            <person name="Takahashi Y."/>
            <person name="Nakagawa K."/>
            <person name="Okumura K."/>
            <person name="Nagase T."/>
            <person name="Nomura N."/>
            <person name="Kikuchi H."/>
            <person name="Masuho Y."/>
            <person name="Yamashita R."/>
            <person name="Nakai K."/>
            <person name="Yada T."/>
            <person name="Nakamura Y."/>
            <person name="Ohara O."/>
            <person name="Isogai T."/>
            <person name="Sugano S."/>
        </authorList>
    </citation>
    <scope>NUCLEOTIDE SEQUENCE [LARGE SCALE MRNA]</scope>
    <source>
        <tissue>Lung</tissue>
    </source>
</reference>
<reference key="5">
    <citation type="submission" date="2002-12" db="EMBL/GenBank/DDBJ databases">
        <authorList>
            <consortium name="SeattleSNPs variation discovery resource"/>
        </authorList>
    </citation>
    <scope>NUCLEOTIDE SEQUENCE [GENOMIC DNA]</scope>
    <scope>VARIANTS THR-9; ALA-19; VAL-50 AND TRP-219</scope>
</reference>
<reference key="6">
    <citation type="journal article" date="2004" name="Nature">
        <title>The DNA sequence and comparative analysis of human chromosome 10.</title>
        <authorList>
            <person name="Deloukas P."/>
            <person name="Earthrowl M.E."/>
            <person name="Grafham D.V."/>
            <person name="Rubenfield M."/>
            <person name="French L."/>
            <person name="Steward C.A."/>
            <person name="Sims S.K."/>
            <person name="Jones M.C."/>
            <person name="Searle S."/>
            <person name="Scott C."/>
            <person name="Howe K."/>
            <person name="Hunt S.E."/>
            <person name="Andrews T.D."/>
            <person name="Gilbert J.G.R."/>
            <person name="Swarbreck D."/>
            <person name="Ashurst J.L."/>
            <person name="Taylor A."/>
            <person name="Battles J."/>
            <person name="Bird C.P."/>
            <person name="Ainscough R."/>
            <person name="Almeida J.P."/>
            <person name="Ashwell R.I.S."/>
            <person name="Ambrose K.D."/>
            <person name="Babbage A.K."/>
            <person name="Bagguley C.L."/>
            <person name="Bailey J."/>
            <person name="Banerjee R."/>
            <person name="Bates K."/>
            <person name="Beasley H."/>
            <person name="Bray-Allen S."/>
            <person name="Brown A.J."/>
            <person name="Brown J.Y."/>
            <person name="Burford D.C."/>
            <person name="Burrill W."/>
            <person name="Burton J."/>
            <person name="Cahill P."/>
            <person name="Camire D."/>
            <person name="Carter N.P."/>
            <person name="Chapman J.C."/>
            <person name="Clark S.Y."/>
            <person name="Clarke G."/>
            <person name="Clee C.M."/>
            <person name="Clegg S."/>
            <person name="Corby N."/>
            <person name="Coulson A."/>
            <person name="Dhami P."/>
            <person name="Dutta I."/>
            <person name="Dunn M."/>
            <person name="Faulkner L."/>
            <person name="Frankish A."/>
            <person name="Frankland J.A."/>
            <person name="Garner P."/>
            <person name="Garnett J."/>
            <person name="Gribble S."/>
            <person name="Griffiths C."/>
            <person name="Grocock R."/>
            <person name="Gustafson E."/>
            <person name="Hammond S."/>
            <person name="Harley J.L."/>
            <person name="Hart E."/>
            <person name="Heath P.D."/>
            <person name="Ho T.P."/>
            <person name="Hopkins B."/>
            <person name="Horne J."/>
            <person name="Howden P.J."/>
            <person name="Huckle E."/>
            <person name="Hynds C."/>
            <person name="Johnson C."/>
            <person name="Johnson D."/>
            <person name="Kana A."/>
            <person name="Kay M."/>
            <person name="Kimberley A.M."/>
            <person name="Kershaw J.K."/>
            <person name="Kokkinaki M."/>
            <person name="Laird G.K."/>
            <person name="Lawlor S."/>
            <person name="Lee H.M."/>
            <person name="Leongamornlert D.A."/>
            <person name="Laird G."/>
            <person name="Lloyd C."/>
            <person name="Lloyd D.M."/>
            <person name="Loveland J."/>
            <person name="Lovell J."/>
            <person name="McLaren S."/>
            <person name="McLay K.E."/>
            <person name="McMurray A."/>
            <person name="Mashreghi-Mohammadi M."/>
            <person name="Matthews L."/>
            <person name="Milne S."/>
            <person name="Nickerson T."/>
            <person name="Nguyen M."/>
            <person name="Overton-Larty E."/>
            <person name="Palmer S.A."/>
            <person name="Pearce A.V."/>
            <person name="Peck A.I."/>
            <person name="Pelan S."/>
            <person name="Phillimore B."/>
            <person name="Porter K."/>
            <person name="Rice C.M."/>
            <person name="Rogosin A."/>
            <person name="Ross M.T."/>
            <person name="Sarafidou T."/>
            <person name="Sehra H.K."/>
            <person name="Shownkeen R."/>
            <person name="Skuce C.D."/>
            <person name="Smith M."/>
            <person name="Standring L."/>
            <person name="Sycamore N."/>
            <person name="Tester J."/>
            <person name="Thorpe A."/>
            <person name="Torcasso W."/>
            <person name="Tracey A."/>
            <person name="Tromans A."/>
            <person name="Tsolas J."/>
            <person name="Wall M."/>
            <person name="Walsh J."/>
            <person name="Wang H."/>
            <person name="Weinstock K."/>
            <person name="West A.P."/>
            <person name="Willey D.L."/>
            <person name="Whitehead S.L."/>
            <person name="Wilming L."/>
            <person name="Wray P.W."/>
            <person name="Young L."/>
            <person name="Chen Y."/>
            <person name="Lovering R.C."/>
            <person name="Moschonas N.K."/>
            <person name="Siebert R."/>
            <person name="Fechtel K."/>
            <person name="Bentley D."/>
            <person name="Durbin R.M."/>
            <person name="Hubbard T."/>
            <person name="Doucette-Stamm L."/>
            <person name="Beck S."/>
            <person name="Smith D.R."/>
            <person name="Rogers J."/>
        </authorList>
    </citation>
    <scope>NUCLEOTIDE SEQUENCE [LARGE SCALE GENOMIC DNA]</scope>
</reference>
<reference key="7">
    <citation type="submission" date="2005-07" db="EMBL/GenBank/DDBJ databases">
        <authorList>
            <person name="Mural R.J."/>
            <person name="Istrail S."/>
            <person name="Sutton G.G."/>
            <person name="Florea L."/>
            <person name="Halpern A.L."/>
            <person name="Mobarry C.M."/>
            <person name="Lippert R."/>
            <person name="Walenz B."/>
            <person name="Shatkay H."/>
            <person name="Dew I."/>
            <person name="Miller J.R."/>
            <person name="Flanigan M.J."/>
            <person name="Edwards N.J."/>
            <person name="Bolanos R."/>
            <person name="Fasulo D."/>
            <person name="Halldorsson B.V."/>
            <person name="Hannenhalli S."/>
            <person name="Turner R."/>
            <person name="Yooseph S."/>
            <person name="Lu F."/>
            <person name="Nusskern D.R."/>
            <person name="Shue B.C."/>
            <person name="Zheng X.H."/>
            <person name="Zhong F."/>
            <person name="Delcher A.L."/>
            <person name="Huson D.H."/>
            <person name="Kravitz S.A."/>
            <person name="Mouchard L."/>
            <person name="Reinert K."/>
            <person name="Remington K.A."/>
            <person name="Clark A.G."/>
            <person name="Waterman M.S."/>
            <person name="Eichler E.E."/>
            <person name="Adams M.D."/>
            <person name="Hunkapiller M.W."/>
            <person name="Myers E.W."/>
            <person name="Venter J.C."/>
        </authorList>
    </citation>
    <scope>NUCLEOTIDE SEQUENCE [LARGE SCALE GENOMIC DNA]</scope>
</reference>
<reference key="8">
    <citation type="journal article" date="2004" name="Genome Res.">
        <title>The status, quality, and expansion of the NIH full-length cDNA project: the Mammalian Gene Collection (MGC).</title>
        <authorList>
            <consortium name="The MGC Project Team"/>
        </authorList>
    </citation>
    <scope>NUCLEOTIDE SEQUENCE [LARGE SCALE MRNA]</scope>
</reference>
<reference key="9">
    <citation type="journal article" date="1989" name="Am. J. Physiol.">
        <title>Studies of the structure of lung surfactant protein SP-A.</title>
        <authorList>
            <person name="Haagsman H.P."/>
            <person name="White R.T."/>
            <person name="Schilling J."/>
            <person name="Lau K."/>
            <person name="Benson B.J."/>
            <person name="Golden J."/>
            <person name="Hawgood S."/>
            <person name="Clements J.A."/>
        </authorList>
    </citation>
    <scope>DISULFIDE BONDS</scope>
    <scope>SUBUNIT</scope>
</reference>
<reference key="10">
    <citation type="journal article" date="1994" name="Am. J. Physiol.">
        <title>Binding of surfactant protein A to C1q receptors mediates phagocytosis of Staphylococcus aureus by monocytes.</title>
        <authorList>
            <person name="Geertsma M.F."/>
            <person name="Nibbering P.H."/>
            <person name="Haagsman H.P."/>
            <person name="Daha M.R."/>
            <person name="van Furth R."/>
        </authorList>
    </citation>
    <scope>INTERACTION WITH CD93</scope>
</reference>
<reference key="11">
    <citation type="journal article" date="1998" name="Biochim. Biophys. Acta">
        <title>Genetics of the hydrophilic surfactant proteins A and D.</title>
        <authorList>
            <person name="Floros J."/>
            <person name="Hoover R.R."/>
        </authorList>
    </citation>
    <scope>DEFINITION OF SFTPA1 ALLELES</scope>
</reference>
<reference key="12">
    <citation type="journal article" date="2000" name="Am. J. Hum. Genet.">
        <title>Association between the surfactant protein A (SP-A) gene locus and respiratory-distress syndrome in the Finnish population.</title>
        <authorList>
            <person name="Raemet M."/>
            <person name="Haataja R."/>
            <person name="Marttila R."/>
            <person name="Floros J."/>
            <person name="Hallman M."/>
        </authorList>
    </citation>
    <scope>INVOLVEMENT IN RDS</scope>
</reference>
<reference key="13">
    <citation type="journal article" date="2005" name="Infect. Immun.">
        <title>Identification and characterization of human surfactant protein A binding protein of Mycoplasma pneumoniae.</title>
        <authorList>
            <person name="Kannan T.R."/>
            <person name="Provenzano D."/>
            <person name="Wright J.R."/>
            <person name="Baseman J.B."/>
        </authorList>
    </citation>
    <scope>FUNCTION (MICROBIAL INFECTION)</scope>
    <scope>INTERACTION WITH M.PNEUMONIAE CARDS TOXIN</scope>
</reference>
<reference key="14">
    <citation type="journal article" date="2007" name="J. Biol. Chem.">
        <title>The Mycobacterium tuberculosis cell-surface glycoprotein Apa as a potential adhesin to colonize target cells via the innate immune system pulmonary C-type lectin surfactant protein A.</title>
        <authorList>
            <person name="Ragas A."/>
            <person name="Roussel L."/>
            <person name="Puzo G."/>
            <person name="Riviere M."/>
        </authorList>
    </citation>
    <scope>FUNCTION (MICROBIAL INFECTION)</scope>
    <scope>INTERACTION WITH M.BOVIS APA</scope>
</reference>
<reference key="15">
    <citation type="journal article" date="2010" name="Protein Cell">
        <title>Identification of four novel DC-SIGN ligands on Mycobacterium bovis BCG.</title>
        <authorList>
            <person name="Carroll M.V."/>
            <person name="Sim R.B."/>
            <person name="Bigi F."/>
            <person name="Jaekel A."/>
            <person name="Antrobus R."/>
            <person name="Mitchell D.A."/>
        </authorList>
    </citation>
    <scope>FUNCTION (MICROBIAL INFECTION)</scope>
</reference>
<reference key="16">
    <citation type="journal article" date="2011" name="J. Biol. Chem.">
        <title>Surfactant protein A (SP-A)-mediated clearance of Staphylococcus aureus involves binding of SP-A to the staphylococcal adhesin eap and the macrophage receptors SP-A receptor 210 and scavenger receptor class A.</title>
        <authorList>
            <person name="Sever-Chroneos Z."/>
            <person name="Krupa A."/>
            <person name="Davis J."/>
            <person name="Hasan M."/>
            <person name="Yang C.H."/>
            <person name="Szeliga J."/>
            <person name="Herrmann M."/>
            <person name="Hussain M."/>
            <person name="Geisbrecht B.V."/>
            <person name="Kobzik L."/>
            <person name="Chroneos Z.C."/>
        </authorList>
    </citation>
    <scope>FUNCTION (MICROBIAL INFECTION)</scope>
    <scope>INTERACTION WITH S.AUREUS EPA</scope>
</reference>
<reference key="17">
    <citation type="journal article" date="2014" name="MBio">
        <title>Annexin A2 mediates Mycoplasma pneumoniae community-acquired respiratory distress syndrome toxin binding to eukaryotic cells.</title>
        <authorList>
            <person name="Somarajan S.R."/>
            <person name="Al-Asadi F."/>
            <person name="Ramasamy K."/>
            <person name="Pandranki L."/>
            <person name="Baseman J.B."/>
            <person name="Kannan T.R."/>
        </authorList>
    </citation>
    <scope>FUNCTION (MICROBIAL INFECTION)</scope>
    <scope>INTERACTION WITH M.PNEUMONIAE CARDS TOXIN</scope>
</reference>
<reference key="18">
    <citation type="journal article" date="2003" name="Hum. Genet.">
        <title>Surfactant protein A and B genetic variants predispose to idiopathic pulmonary fibrosis.</title>
        <authorList>
            <person name="Selman M."/>
            <person name="Lin H.-M."/>
            <person name="Montano M."/>
            <person name="Jenkins A.L."/>
            <person name="Estrada A."/>
            <person name="Lin Z."/>
            <person name="Wang G."/>
            <person name="DiAngelo S.L."/>
            <person name="Guo X."/>
            <person name="Umstead T.M."/>
            <person name="Lang C.M."/>
            <person name="Pardo A."/>
            <person name="Phelps D.S."/>
            <person name="Floros J."/>
        </authorList>
    </citation>
    <scope>VARIANT TRP-219</scope>
    <scope>ASSOCIATION WITH IDIOPATHIC PULMONARY FIBROSIS</scope>
</reference>
<reference key="19">
    <citation type="journal article" date="2009" name="Am. J. Hum. Genet.">
        <title>Genetic defects in surfactant protein A2 are associated with pulmonary fibrosis and lung cancer.</title>
        <authorList>
            <person name="Wang Y."/>
            <person name="Kuan P.J."/>
            <person name="Xing C."/>
            <person name="Cronkhite J.T."/>
            <person name="Torres F."/>
            <person name="Rosenblatt R.L."/>
            <person name="DiMaio J.M."/>
            <person name="Kinch L.N."/>
            <person name="Grishin N.V."/>
            <person name="Garcia C.K."/>
        </authorList>
    </citation>
    <scope>VARIANTS LEU-5; THR-9; ALA-19; VAL-50 AND TRP-219</scope>
</reference>
<reference key="20">
    <citation type="journal article" date="2016" name="Hum. Mol. Genet.">
        <title>Germline SFTPA1 mutation in familial idiopathic interstitial pneumonia and lung cancer.</title>
        <authorList>
            <person name="Nathan N."/>
            <person name="Giraud V."/>
            <person name="Picard C."/>
            <person name="Nunes H."/>
            <person name="Dastot-Le Moal F."/>
            <person name="Copin B."/>
            <person name="Galeron L."/>
            <person name="De Ligniville A."/>
            <person name="Kuziner N."/>
            <person name="Reynaud-Gaubert M."/>
            <person name="Valeyre D."/>
            <person name="Couderc L.J."/>
            <person name="Chinet T."/>
            <person name="Borie R."/>
            <person name="Crestani B."/>
            <person name="Simansour M."/>
            <person name="Nau V."/>
            <person name="Tissier S."/>
            <person name="Duquesnoy P."/>
            <person name="Mansour-Hendili L."/>
            <person name="Legendre M."/>
            <person name="Kannengiesser C."/>
            <person name="Coulomb-L'Hermine A."/>
            <person name="Gouya L."/>
            <person name="Amselem S."/>
            <person name="Clement A."/>
        </authorList>
    </citation>
    <scope>VARIANT ILD1 ARG-211</scope>
    <scope>CHARACTERIZATION OF VARIANT ILD1 ARG-211</scope>
    <scope>VARIANT TRP-219</scope>
    <scope>CHARACTERIZATION OF VARIANT TRP-219</scope>
    <scope>INVOLVEMENT IN ILD1</scope>
    <scope>SUBCELLULAR LOCATION</scope>
</reference>
<reference key="21">
    <citation type="journal article" date="2019" name="Hum. Genome Var.">
        <title>A novel germline mutation of the SFTPA1 gene in familial interstitial pneumonia.</title>
        <authorList>
            <person name="Doubkova M."/>
            <person name="Stano Kozubik K."/>
            <person name="Radova L."/>
            <person name="Pesova M."/>
            <person name="Trizuljak J."/>
            <person name="Pal K."/>
            <person name="Svobodova K."/>
            <person name="Reblova K."/>
            <person name="Svozilova H."/>
            <person name="Vrzalova Z."/>
            <person name="Pospisilova S."/>
            <person name="Doubek M."/>
        </authorList>
    </citation>
    <scope>VARIANT ILD1 MET-178</scope>
    <scope>INVOLVEMENT IN ILD1</scope>
</reference>
<reference key="22">
    <citation type="journal article" date="2019" name="J. Exp. Med.">
        <title>A homozygous SFTPA1 mutation drives necroptosis of type II alveolar epithelial cells in patients with idiopathic pulmonary fibrosis.</title>
        <authorList>
            <person name="Takezaki A."/>
            <person name="Tsukumo S.I."/>
            <person name="Setoguchi Y."/>
            <person name="Ledford J.G."/>
            <person name="Goto H."/>
            <person name="Hosomichi K."/>
            <person name="Uehara H."/>
            <person name="Nishioka Y."/>
            <person name="Yasutomo K."/>
        </authorList>
    </citation>
    <scope>VARIANT ILD1 HIS-208</scope>
</reference>
<reference key="23">
    <citation type="journal article" date="2020" name="Eur. Respir. J.">
        <title>Functional assessment and phenotypic heterogeneity of SFTPA1 and SFTPA2 mutations in interstitial lung diseases and lung cancer.</title>
        <authorList>
            <person name="Legendre M."/>
            <person name="Butt A."/>
            <person name="Borie R."/>
            <person name="Debray M.P."/>
            <person name="Bouvry D."/>
            <person name="Filhol-Blin E."/>
            <person name="Desroziers T."/>
            <person name="Nau V."/>
            <person name="Copin B."/>
            <person name="Dastot-Le Moal F."/>
            <person name="Hery M."/>
            <person name="Duquesnoy P."/>
            <person name="Allou N."/>
            <person name="Bergeron A."/>
            <person name="Bermudez J."/>
            <person name="Cazes A."/>
            <person name="Chene A.L."/>
            <person name="Cottin V."/>
            <person name="Crestani B."/>
            <person name="Dalphin J.C."/>
            <person name="Dombret C."/>
            <person name="Doray B."/>
            <person name="Dupin C."/>
            <person name="Giraud V."/>
            <person name="Gondouin A."/>
            <person name="Gouya L."/>
            <person name="Israel-Biet D."/>
            <person name="Kannengiesser C."/>
            <person name="Le Borgne A."/>
            <person name="Leroy S."/>
            <person name="Longchampt E."/>
            <person name="Lorillon G."/>
            <person name="Nunes H."/>
            <person name="Picard C."/>
            <person name="Reynaud-Gaubert M."/>
            <person name="Traclet J."/>
            <person name="de Vuyst P."/>
            <person name="Coulomb L'Hermine A."/>
            <person name="Clement A."/>
            <person name="Amselem S."/>
            <person name="Nathan N."/>
        </authorList>
    </citation>
    <scope>VARIANTS ILD1 MET-178 AND MET-225</scope>
    <scope>CHARACTERIZATION OF VARIANTS ILD1 MET-178; ARG-211 AND MET-225</scope>
    <scope>SUBCELLULAR LOCATION</scope>
</reference>
<accession>Q8IWL2</accession>
<accession>A8K3T8</accession>
<accession>B7ZW50</accession>
<accession>E3VLD8</accession>
<accession>E3VLD9</accession>
<accession>E3VLE0</accession>
<accession>E3VLE1</accession>
<accession>G5E9J3</accession>
<accession>P07714</accession>
<accession>Q14DV4</accession>
<accession>Q5RIR5</accession>
<accession>Q5RIR7</accession>
<accession>Q6PIT0</accession>
<accession>Q8TC19</accession>
<gene>
    <name type="primary">SFTPA1</name>
    <name type="synonym">COLEC4</name>
    <name type="synonym">PSAP</name>
    <name type="synonym">SFTP1</name>
    <name type="synonym">SFTPA</name>
    <name type="synonym">SFTPA1B</name>
</gene>
<dbReference type="EMBL" id="M30838">
    <property type="protein sequence ID" value="AAA36510.1"/>
    <property type="molecule type" value="Genomic_DNA"/>
</dbReference>
<dbReference type="EMBL" id="M13686">
    <property type="protein sequence ID" value="AAA60211.1"/>
    <property type="molecule type" value="mRNA"/>
</dbReference>
<dbReference type="EMBL" id="HQ021433">
    <property type="protein sequence ID" value="ADO27676.1"/>
    <property type="molecule type" value="mRNA"/>
</dbReference>
<dbReference type="EMBL" id="HQ021434">
    <property type="protein sequence ID" value="ADO27677.1"/>
    <property type="molecule type" value="mRNA"/>
</dbReference>
<dbReference type="EMBL" id="HQ021435">
    <property type="protein sequence ID" value="ADO27678.1"/>
    <property type="molecule type" value="mRNA"/>
</dbReference>
<dbReference type="EMBL" id="HQ021436">
    <property type="protein sequence ID" value="ADO27679.1"/>
    <property type="molecule type" value="mRNA"/>
</dbReference>
<dbReference type="EMBL" id="HQ021437">
    <property type="protein sequence ID" value="ADO27680.1"/>
    <property type="molecule type" value="mRNA"/>
</dbReference>
<dbReference type="EMBL" id="HQ021438">
    <property type="protein sequence ID" value="ADO27681.1"/>
    <property type="molecule type" value="mRNA"/>
</dbReference>
<dbReference type="EMBL" id="HQ021439">
    <property type="protein sequence ID" value="ADO27682.1"/>
    <property type="molecule type" value="mRNA"/>
</dbReference>
<dbReference type="EMBL" id="HQ021440">
    <property type="protein sequence ID" value="ADO27683.1"/>
    <property type="molecule type" value="mRNA"/>
</dbReference>
<dbReference type="EMBL" id="HQ021441">
    <property type="protein sequence ID" value="ADO27684.1"/>
    <property type="molecule type" value="mRNA"/>
</dbReference>
<dbReference type="EMBL" id="HQ021442">
    <property type="protein sequence ID" value="ADO27685.1"/>
    <property type="molecule type" value="mRNA"/>
</dbReference>
<dbReference type="EMBL" id="AK290703">
    <property type="protein sequence ID" value="BAF83392.1"/>
    <property type="molecule type" value="mRNA"/>
</dbReference>
<dbReference type="EMBL" id="AY198391">
    <property type="protein sequence ID" value="AAO13486.1"/>
    <property type="molecule type" value="Genomic_DNA"/>
</dbReference>
<dbReference type="EMBL" id="BX248123">
    <property type="status" value="NOT_ANNOTATED_CDS"/>
    <property type="molecule type" value="Genomic_DNA"/>
</dbReference>
<dbReference type="EMBL" id="CH471083">
    <property type="protein sequence ID" value="EAW54657.1"/>
    <property type="molecule type" value="Genomic_DNA"/>
</dbReference>
<dbReference type="EMBL" id="CH471083">
    <property type="protein sequence ID" value="EAW54651.1"/>
    <property type="molecule type" value="Genomic_DNA"/>
</dbReference>
<dbReference type="EMBL" id="CH471083">
    <property type="protein sequence ID" value="EAW54658.1"/>
    <property type="molecule type" value="Genomic_DNA"/>
</dbReference>
<dbReference type="EMBL" id="BC029913">
    <property type="protein sequence ID" value="AAH29913.1"/>
    <property type="molecule type" value="mRNA"/>
</dbReference>
<dbReference type="EMBL" id="BC111570">
    <property type="protein sequence ID" value="AAI11571.1"/>
    <property type="molecule type" value="mRNA"/>
</dbReference>
<dbReference type="EMBL" id="BC171875">
    <property type="protein sequence ID" value="AAI71875.1"/>
    <property type="molecule type" value="mRNA"/>
</dbReference>
<dbReference type="CCDS" id="CCDS44444.2">
    <molecule id="Q8IWL2-2"/>
</dbReference>
<dbReference type="CCDS" id="CCDS44445.1">
    <molecule id="Q8IWL2-1"/>
</dbReference>
<dbReference type="PIR" id="A24622">
    <property type="entry name" value="LNHUPS"/>
</dbReference>
<dbReference type="PIR" id="A25720">
    <property type="entry name" value="LNHUP6"/>
</dbReference>
<dbReference type="RefSeq" id="NP_001087239.2">
    <molecule id="Q8IWL2-2"/>
    <property type="nucleotide sequence ID" value="NM_001093770.3"/>
</dbReference>
<dbReference type="RefSeq" id="NP_001158116.1">
    <molecule id="Q8IWL2-1"/>
    <property type="nucleotide sequence ID" value="NM_001164644.2"/>
</dbReference>
<dbReference type="RefSeq" id="NP_001158119.1">
    <molecule id="Q8IWL2-1"/>
    <property type="nucleotide sequence ID" value="NM_001164647.1"/>
</dbReference>
<dbReference type="RefSeq" id="NP_005402.3">
    <molecule id="Q8IWL2-1"/>
    <property type="nucleotide sequence ID" value="NM_005411.4"/>
</dbReference>
<dbReference type="RefSeq" id="XP_005270119.1">
    <molecule id="Q8IWL2-1"/>
    <property type="nucleotide sequence ID" value="XM_005270062.6"/>
</dbReference>
<dbReference type="RefSeq" id="XP_006718016.1">
    <molecule id="Q8IWL2-2"/>
    <property type="nucleotide sequence ID" value="XM_006717953.3"/>
</dbReference>
<dbReference type="RefSeq" id="XP_047281623.1">
    <molecule id="Q8IWL2-2"/>
    <property type="nucleotide sequence ID" value="XM_047425667.1"/>
</dbReference>
<dbReference type="RefSeq" id="XP_047281624.1">
    <molecule id="Q8IWL2-2"/>
    <property type="nucleotide sequence ID" value="XM_047425668.1"/>
</dbReference>
<dbReference type="RefSeq" id="XP_047281625.1">
    <molecule id="Q8IWL2-2"/>
    <property type="nucleotide sequence ID" value="XM_047425669.1"/>
</dbReference>
<dbReference type="RefSeq" id="XP_047281626.1">
    <molecule id="Q8IWL2-2"/>
    <property type="nucleotide sequence ID" value="XM_047425670.1"/>
</dbReference>
<dbReference type="RefSeq" id="XP_047281627.1">
    <molecule id="Q8IWL2-2"/>
    <property type="nucleotide sequence ID" value="XM_047425671.1"/>
</dbReference>
<dbReference type="RefSeq" id="XP_047281628.1">
    <molecule id="Q8IWL2-2"/>
    <property type="nucleotide sequence ID" value="XM_047425672.1"/>
</dbReference>
<dbReference type="RefSeq" id="XP_047281629.1">
    <molecule id="Q8IWL2-2"/>
    <property type="nucleotide sequence ID" value="XM_047425673.1"/>
</dbReference>
<dbReference type="RefSeq" id="XP_047281630.1">
    <molecule id="Q8IWL2-1"/>
    <property type="nucleotide sequence ID" value="XM_047425674.1"/>
</dbReference>
<dbReference type="RefSeq" id="XP_047281631.1">
    <molecule id="Q8IWL2-1"/>
    <property type="nucleotide sequence ID" value="XM_047425675.1"/>
</dbReference>
<dbReference type="SMR" id="Q8IWL2"/>
<dbReference type="BioGRID" id="575839">
    <property type="interactions" value="4"/>
</dbReference>
<dbReference type="FunCoup" id="Q8IWL2">
    <property type="interactions" value="231"/>
</dbReference>
<dbReference type="IntAct" id="Q8IWL2">
    <property type="interactions" value="2"/>
</dbReference>
<dbReference type="STRING" id="9606.ENSP00000397082"/>
<dbReference type="BindingDB" id="Q8IWL2"/>
<dbReference type="DrugBank" id="DB03814">
    <property type="generic name" value="2-(N-morpholino)ethanesulfonic acid"/>
</dbReference>
<dbReference type="GlyCosmos" id="Q8IWL2">
    <property type="glycosylation" value="1 site, No reported glycans"/>
</dbReference>
<dbReference type="GlyGen" id="Q8IWL2">
    <property type="glycosylation" value="3 sites"/>
</dbReference>
<dbReference type="iPTMnet" id="Q8IWL2"/>
<dbReference type="PhosphoSitePlus" id="Q8IWL2"/>
<dbReference type="BioMuta" id="SFTPA1"/>
<dbReference type="DMDM" id="60416440"/>
<dbReference type="CPTAC" id="CPTAC-1214"/>
<dbReference type="MassIVE" id="Q8IWL2"/>
<dbReference type="PaxDb" id="9606-ENSP00000397082"/>
<dbReference type="PeptideAtlas" id="Q8IWL2"/>
<dbReference type="ProteomicsDB" id="33955"/>
<dbReference type="ProteomicsDB" id="70869">
    <molecule id="Q8IWL2-1"/>
</dbReference>
<dbReference type="ABCD" id="Q8IWL2">
    <property type="antibodies" value="8 sequenced antibodies"/>
</dbReference>
<dbReference type="Antibodypedia" id="45521">
    <property type="antibodies" value="391 antibodies from 34 providers"/>
</dbReference>
<dbReference type="DNASU" id="653509"/>
<dbReference type="Ensembl" id="ENST00000398636.8">
    <molecule id="Q8IWL2-1"/>
    <property type="protein sequence ID" value="ENSP00000381633.3"/>
    <property type="gene ID" value="ENSG00000122852.15"/>
</dbReference>
<dbReference type="Ensembl" id="ENST00000419470.6">
    <molecule id="Q8IWL2-2"/>
    <property type="protein sequence ID" value="ENSP00000397082.2"/>
    <property type="gene ID" value="ENSG00000122852.15"/>
</dbReference>
<dbReference type="Ensembl" id="ENST00000428376.6">
    <molecule id="Q8IWL2-1"/>
    <property type="protein sequence ID" value="ENSP00000411102.2"/>
    <property type="gene ID" value="ENSG00000122852.15"/>
</dbReference>
<dbReference type="GeneID" id="653509"/>
<dbReference type="KEGG" id="hsa:653509"/>
<dbReference type="MANE-Select" id="ENST00000398636.8">
    <property type="protein sequence ID" value="ENSP00000381633.3"/>
    <property type="RefSeq nucleotide sequence ID" value="NM_005411.5"/>
    <property type="RefSeq protein sequence ID" value="NP_005402.3"/>
</dbReference>
<dbReference type="UCSC" id="uc001kap.4">
    <molecule id="Q8IWL2-1"/>
    <property type="organism name" value="human"/>
</dbReference>
<dbReference type="AGR" id="HGNC:10798"/>
<dbReference type="CTD" id="653509"/>
<dbReference type="DisGeNET" id="653509"/>
<dbReference type="GeneCards" id="SFTPA1"/>
<dbReference type="HGNC" id="HGNC:10798">
    <property type="gene designation" value="SFTPA1"/>
</dbReference>
<dbReference type="HPA" id="ENSG00000122852">
    <property type="expression patterns" value="Tissue enriched (lung)"/>
</dbReference>
<dbReference type="MalaCards" id="SFTPA1"/>
<dbReference type="MIM" id="178630">
    <property type="type" value="gene"/>
</dbReference>
<dbReference type="MIM" id="267450">
    <property type="type" value="phenotype"/>
</dbReference>
<dbReference type="MIM" id="619611">
    <property type="type" value="phenotype"/>
</dbReference>
<dbReference type="neXtProt" id="NX_Q8IWL2"/>
<dbReference type="OpenTargets" id="ENSG00000122852"/>
<dbReference type="Orphanet" id="2032">
    <property type="disease" value="Idiopathic pulmonary fibrosis"/>
</dbReference>
<dbReference type="PharmGKB" id="PA35710"/>
<dbReference type="VEuPathDB" id="HostDB:ENSG00000122852"/>
<dbReference type="eggNOG" id="KOG4297">
    <property type="taxonomic scope" value="Eukaryota"/>
</dbReference>
<dbReference type="GeneTree" id="ENSGT00940000156653"/>
<dbReference type="HOGENOM" id="CLU_049894_3_0_1"/>
<dbReference type="InParanoid" id="Q8IWL2"/>
<dbReference type="OMA" id="VRKHNTY"/>
<dbReference type="OrthoDB" id="7357196at2759"/>
<dbReference type="PAN-GO" id="Q8IWL2">
    <property type="GO annotations" value="3 GO annotations based on evolutionary models"/>
</dbReference>
<dbReference type="PhylomeDB" id="Q8IWL2"/>
<dbReference type="TreeFam" id="TF330481"/>
<dbReference type="PathwayCommons" id="Q8IWL2"/>
<dbReference type="Reactome" id="R-HSA-166016">
    <property type="pathway name" value="Toll Like Receptor 4 (TLR4) Cascade"/>
</dbReference>
<dbReference type="Reactome" id="R-HSA-168179">
    <property type="pathway name" value="Toll Like Receptor TLR1:TLR2 Cascade"/>
</dbReference>
<dbReference type="Reactome" id="R-HSA-391160">
    <property type="pathway name" value="Signal regulatory protein family interactions"/>
</dbReference>
<dbReference type="Reactome" id="R-HSA-5683826">
    <property type="pathway name" value="Surfactant metabolism"/>
</dbReference>
<dbReference type="Reactome" id="R-HSA-5686938">
    <property type="pathway name" value="Regulation of TLR by endogenous ligand"/>
</dbReference>
<dbReference type="Reactome" id="R-HSA-5688849">
    <property type="pathway name" value="Defective CSF2RB causes SMDP5"/>
</dbReference>
<dbReference type="Reactome" id="R-HSA-5688890">
    <property type="pathway name" value="Defective CSF2RA causes SMDP4"/>
</dbReference>
<dbReference type="SignaLink" id="Q8IWL2"/>
<dbReference type="BioGRID-ORCS" id="653509">
    <property type="hits" value="14 hits in 1052 CRISPR screens"/>
</dbReference>
<dbReference type="GeneWiki" id="Pulmonary_surfactant-associated_protein_A1"/>
<dbReference type="GenomeRNAi" id="653509"/>
<dbReference type="Pharos" id="Q8IWL2">
    <property type="development level" value="Tbio"/>
</dbReference>
<dbReference type="PRO" id="PR:Q8IWL2"/>
<dbReference type="Proteomes" id="UP000005640">
    <property type="component" value="Chromosome 10"/>
</dbReference>
<dbReference type="RNAct" id="Q8IWL2">
    <property type="molecule type" value="protein"/>
</dbReference>
<dbReference type="Bgee" id="ENSG00000122852">
    <property type="expression patterns" value="Expressed in right lung and 79 other cell types or tissues"/>
</dbReference>
<dbReference type="ExpressionAtlas" id="Q8IWL2">
    <property type="expression patterns" value="baseline and differential"/>
</dbReference>
<dbReference type="GO" id="GO:0045334">
    <property type="term" value="C:clathrin-coated endocytic vesicle"/>
    <property type="evidence" value="ECO:0000304"/>
    <property type="project" value="Reactome"/>
</dbReference>
<dbReference type="GO" id="GO:0005581">
    <property type="term" value="C:collagen trimer"/>
    <property type="evidence" value="ECO:0007669"/>
    <property type="project" value="UniProtKB-KW"/>
</dbReference>
<dbReference type="GO" id="GO:0005789">
    <property type="term" value="C:endoplasmic reticulum membrane"/>
    <property type="evidence" value="ECO:0000304"/>
    <property type="project" value="Reactome"/>
</dbReference>
<dbReference type="GO" id="GO:0005576">
    <property type="term" value="C:extracellular region"/>
    <property type="evidence" value="ECO:0000304"/>
    <property type="project" value="Reactome"/>
</dbReference>
<dbReference type="GO" id="GO:0005615">
    <property type="term" value="C:extracellular space"/>
    <property type="evidence" value="ECO:0000318"/>
    <property type="project" value="GO_Central"/>
</dbReference>
<dbReference type="GO" id="GO:0042599">
    <property type="term" value="C:lamellar body"/>
    <property type="evidence" value="ECO:0000304"/>
    <property type="project" value="Reactome"/>
</dbReference>
<dbReference type="GO" id="GO:0005771">
    <property type="term" value="C:multivesicular body"/>
    <property type="evidence" value="ECO:0000318"/>
    <property type="project" value="GO_Central"/>
</dbReference>
<dbReference type="GO" id="GO:0030246">
    <property type="term" value="F:carbohydrate binding"/>
    <property type="evidence" value="ECO:0007669"/>
    <property type="project" value="UniProtKB-KW"/>
</dbReference>
<dbReference type="GO" id="GO:0005319">
    <property type="term" value="F:lipid transporter activity"/>
    <property type="evidence" value="ECO:0000304"/>
    <property type="project" value="ProtInc"/>
</dbReference>
<dbReference type="GO" id="GO:0008228">
    <property type="term" value="P:opsonization"/>
    <property type="evidence" value="ECO:0000315"/>
    <property type="project" value="UniProtKB"/>
</dbReference>
<dbReference type="GO" id="GO:0007585">
    <property type="term" value="P:respiratory gaseous exchange by respiratory system"/>
    <property type="evidence" value="ECO:0007669"/>
    <property type="project" value="UniProtKB-KW"/>
</dbReference>
<dbReference type="CDD" id="cd03591">
    <property type="entry name" value="CLECT_collectin_like"/>
    <property type="match status" value="1"/>
</dbReference>
<dbReference type="FunFam" id="3.10.100.10:FF:000056">
    <property type="entry name" value="Pulmonary surfactant-associated protein A"/>
    <property type="match status" value="1"/>
</dbReference>
<dbReference type="Gene3D" id="3.10.100.10">
    <property type="entry name" value="Mannose-Binding Protein A, subunit A"/>
    <property type="match status" value="1"/>
</dbReference>
<dbReference type="InterPro" id="IPR001304">
    <property type="entry name" value="C-type_lectin-like"/>
</dbReference>
<dbReference type="InterPro" id="IPR016186">
    <property type="entry name" value="C-type_lectin-like/link_sf"/>
</dbReference>
<dbReference type="InterPro" id="IPR018378">
    <property type="entry name" value="C-type_lectin_CS"/>
</dbReference>
<dbReference type="InterPro" id="IPR051663">
    <property type="entry name" value="CLec_Tetranectin-domain"/>
</dbReference>
<dbReference type="InterPro" id="IPR033990">
    <property type="entry name" value="Collectin_CTLD"/>
</dbReference>
<dbReference type="InterPro" id="IPR016187">
    <property type="entry name" value="CTDL_fold"/>
</dbReference>
<dbReference type="PANTHER" id="PTHR22799:SF1">
    <property type="entry name" value="C-TYPE LECTIN DOMAIN FAMILY 11 MEMBER A"/>
    <property type="match status" value="1"/>
</dbReference>
<dbReference type="PANTHER" id="PTHR22799">
    <property type="entry name" value="TETRANECTIN-RELATED"/>
    <property type="match status" value="1"/>
</dbReference>
<dbReference type="Pfam" id="PF00059">
    <property type="entry name" value="Lectin_C"/>
    <property type="match status" value="1"/>
</dbReference>
<dbReference type="SMART" id="SM00034">
    <property type="entry name" value="CLECT"/>
    <property type="match status" value="1"/>
</dbReference>
<dbReference type="SUPFAM" id="SSF56436">
    <property type="entry name" value="C-type lectin-like"/>
    <property type="match status" value="1"/>
</dbReference>
<dbReference type="SUPFAM" id="SSF57944">
    <property type="entry name" value="Triple coiled coil domain of C-type lectins"/>
    <property type="match status" value="1"/>
</dbReference>
<dbReference type="PROSITE" id="PS00615">
    <property type="entry name" value="C_TYPE_LECTIN_1"/>
    <property type="match status" value="1"/>
</dbReference>
<dbReference type="PROSITE" id="PS50041">
    <property type="entry name" value="C_TYPE_LECTIN_2"/>
    <property type="match status" value="1"/>
</dbReference>
<keyword id="KW-0007">Acetylation</keyword>
<keyword id="KW-0025">Alternative splicing</keyword>
<keyword id="KW-0106">Calcium</keyword>
<keyword id="KW-0176">Collagen</keyword>
<keyword id="KW-0225">Disease variant</keyword>
<keyword id="KW-1015">Disulfide bond</keyword>
<keyword id="KW-0272">Extracellular matrix</keyword>
<keyword id="KW-0305">Gaseous exchange</keyword>
<keyword id="KW-0325">Glycoprotein</keyword>
<keyword id="KW-0379">Hydroxylation</keyword>
<keyword id="KW-0430">Lectin</keyword>
<keyword id="KW-1267">Proteomics identification</keyword>
<keyword id="KW-1185">Reference proteome</keyword>
<keyword id="KW-0964">Secreted</keyword>
<keyword id="KW-0732">Signal</keyword>
<keyword id="KW-0767">Surface film</keyword>
<protein>
    <recommendedName>
        <fullName>Pulmonary surfactant-associated protein A1</fullName>
        <shortName>PSP-A</shortName>
        <shortName>PSPA</shortName>
        <shortName>SP-A</shortName>
        <shortName>SP-A1</shortName>
    </recommendedName>
    <alternativeName>
        <fullName>35 kDa pulmonary surfactant-associated protein</fullName>
    </alternativeName>
    <alternativeName>
        <fullName>Alveolar proteinosis protein</fullName>
    </alternativeName>
    <alternativeName>
        <fullName>Collectin-4</fullName>
    </alternativeName>
</protein>